<protein>
    <recommendedName>
        <fullName evidence="1">ESAT-6-like protein EsxL</fullName>
    </recommendedName>
</protein>
<proteinExistence type="inferred from homology"/>
<feature type="chain" id="PRO_0000167804" description="ESAT-6-like protein EsxL">
    <location>
        <begin position="1"/>
        <end position="94"/>
    </location>
</feature>
<comment type="subunit">
    <text evidence="1">Strongly interacts with EsxK to form a heterodimeric complex under reducing conditions.</text>
</comment>
<comment type="subcellular location">
    <subcellularLocation>
        <location evidence="1">Secreted</location>
    </subcellularLocation>
    <text evidence="1">Probably secreted via the ESX-5 / type VII secretion system (T7SS).</text>
</comment>
<comment type="similarity">
    <text evidence="2">Belongs to the WXG100 family. ESAT-6 subfamily.</text>
</comment>
<sequence length="94" mass="9972">MTINYQFGDVDDHGAMIRAQAGLLEAEHQAIIRDVLTASDFWGGAGSAACQGFITQLGRNFQVIYEQANAHGQKVQAAGNNMAQTDSAVGSSWA</sequence>
<dbReference type="EMBL" id="LT708304">
    <property type="protein sequence ID" value="SIT99831.1"/>
    <property type="molecule type" value="Genomic_DNA"/>
</dbReference>
<dbReference type="RefSeq" id="NP_854884.1">
    <property type="nucleotide sequence ID" value="NC_002945.3"/>
</dbReference>
<dbReference type="RefSeq" id="WP_003421606.1">
    <property type="nucleotide sequence ID" value="NC_002945.4"/>
</dbReference>
<dbReference type="SMR" id="P59804"/>
<dbReference type="KEGG" id="mbo:BQ2027_MB1230"/>
<dbReference type="PATRIC" id="fig|233413.5.peg.1349"/>
<dbReference type="Proteomes" id="UP000001419">
    <property type="component" value="Chromosome"/>
</dbReference>
<dbReference type="GO" id="GO:0005576">
    <property type="term" value="C:extracellular region"/>
    <property type="evidence" value="ECO:0007669"/>
    <property type="project" value="UniProtKB-SubCell"/>
</dbReference>
<dbReference type="FunFam" id="1.10.287.1060:FF:000004">
    <property type="entry name" value="ESAT-6-like protein EsxI"/>
    <property type="match status" value="1"/>
</dbReference>
<dbReference type="Gene3D" id="1.10.287.1060">
    <property type="entry name" value="ESAT-6-like"/>
    <property type="match status" value="1"/>
</dbReference>
<dbReference type="InterPro" id="IPR009416">
    <property type="entry name" value="ESAT-6-like_Myco"/>
</dbReference>
<dbReference type="InterPro" id="IPR036689">
    <property type="entry name" value="ESAT-6-like_sf"/>
</dbReference>
<dbReference type="InterPro" id="IPR010310">
    <property type="entry name" value="T7SS_ESAT-6-like"/>
</dbReference>
<dbReference type="Pfam" id="PF06013">
    <property type="entry name" value="WXG100"/>
    <property type="match status" value="1"/>
</dbReference>
<dbReference type="PIRSF" id="PIRSF037656">
    <property type="entry name" value="DUF1066"/>
    <property type="match status" value="1"/>
</dbReference>
<dbReference type="SUPFAM" id="SSF140453">
    <property type="entry name" value="EsxAB dimer-like"/>
    <property type="match status" value="1"/>
</dbReference>
<accession>P59804</accession>
<accession>A0A1R3XXN0</accession>
<accession>X2BGY3</accession>
<keyword id="KW-1185">Reference proteome</keyword>
<keyword id="KW-0964">Secreted</keyword>
<name>ESXL_MYCBO</name>
<organism>
    <name type="scientific">Mycobacterium bovis (strain ATCC BAA-935 / AF2122/97)</name>
    <dbReference type="NCBI Taxonomy" id="233413"/>
    <lineage>
        <taxon>Bacteria</taxon>
        <taxon>Bacillati</taxon>
        <taxon>Actinomycetota</taxon>
        <taxon>Actinomycetes</taxon>
        <taxon>Mycobacteriales</taxon>
        <taxon>Mycobacteriaceae</taxon>
        <taxon>Mycobacterium</taxon>
        <taxon>Mycobacterium tuberculosis complex</taxon>
    </lineage>
</organism>
<evidence type="ECO:0000250" key="1">
    <source>
        <dbReference type="UniProtKB" id="P9WNJ5"/>
    </source>
</evidence>
<evidence type="ECO:0000305" key="2"/>
<reference key="1">
    <citation type="journal article" date="2003" name="Proc. Natl. Acad. Sci. U.S.A.">
        <title>The complete genome sequence of Mycobacterium bovis.</title>
        <authorList>
            <person name="Garnier T."/>
            <person name="Eiglmeier K."/>
            <person name="Camus J.-C."/>
            <person name="Medina N."/>
            <person name="Mansoor H."/>
            <person name="Pryor M."/>
            <person name="Duthoy S."/>
            <person name="Grondin S."/>
            <person name="Lacroix C."/>
            <person name="Monsempe C."/>
            <person name="Simon S."/>
            <person name="Harris B."/>
            <person name="Atkin R."/>
            <person name="Doggett J."/>
            <person name="Mayes R."/>
            <person name="Keating L."/>
            <person name="Wheeler P.R."/>
            <person name="Parkhill J."/>
            <person name="Barrell B.G."/>
            <person name="Cole S.T."/>
            <person name="Gordon S.V."/>
            <person name="Hewinson R.G."/>
        </authorList>
    </citation>
    <scope>NUCLEOTIDE SEQUENCE [LARGE SCALE GENOMIC DNA]</scope>
    <source>
        <strain>ATCC BAA-935 / AF2122/97</strain>
    </source>
</reference>
<reference key="2">
    <citation type="journal article" date="2017" name="Genome Announc.">
        <title>Updated reference genome sequence and annotation of Mycobacterium bovis AF2122/97.</title>
        <authorList>
            <person name="Malone K.M."/>
            <person name="Farrell D."/>
            <person name="Stuber T.P."/>
            <person name="Schubert O.T."/>
            <person name="Aebersold R."/>
            <person name="Robbe-Austerman S."/>
            <person name="Gordon S.V."/>
        </authorList>
    </citation>
    <scope>NUCLEOTIDE SEQUENCE [LARGE SCALE GENOMIC DNA]</scope>
    <scope>GENOME REANNOTATION</scope>
    <source>
        <strain>ATCC BAA-935 / AF2122/97</strain>
    </source>
</reference>
<gene>
    <name evidence="1" type="primary">esxL</name>
    <name type="ordered locus">BQ2027_MB1230</name>
</gene>